<reference key="1">
    <citation type="submission" date="2009-01" db="EMBL/GenBank/DDBJ databases">
        <title>Complete sequence of chromosome of Methylobacterium nodulans ORS 2060.</title>
        <authorList>
            <consortium name="US DOE Joint Genome Institute"/>
            <person name="Lucas S."/>
            <person name="Copeland A."/>
            <person name="Lapidus A."/>
            <person name="Glavina del Rio T."/>
            <person name="Dalin E."/>
            <person name="Tice H."/>
            <person name="Bruce D."/>
            <person name="Goodwin L."/>
            <person name="Pitluck S."/>
            <person name="Sims D."/>
            <person name="Brettin T."/>
            <person name="Detter J.C."/>
            <person name="Han C."/>
            <person name="Larimer F."/>
            <person name="Land M."/>
            <person name="Hauser L."/>
            <person name="Kyrpides N."/>
            <person name="Ivanova N."/>
            <person name="Marx C.J."/>
            <person name="Richardson P."/>
        </authorList>
    </citation>
    <scope>NUCLEOTIDE SEQUENCE [LARGE SCALE GENOMIC DNA]</scope>
    <source>
        <strain>LMG 21967 / CNCM I-2342 / ORS 2060</strain>
    </source>
</reference>
<keyword id="KW-1185">Reference proteome</keyword>
<keyword id="KW-0687">Ribonucleoprotein</keyword>
<keyword id="KW-0689">Ribosomal protein</keyword>
<evidence type="ECO:0000255" key="1">
    <source>
        <dbReference type="HAMAP-Rule" id="MF_00358"/>
    </source>
</evidence>
<evidence type="ECO:0000256" key="2">
    <source>
        <dbReference type="SAM" id="MobiDB-lite"/>
    </source>
</evidence>
<evidence type="ECO:0000305" key="3"/>
<feature type="chain" id="PRO_1000194298" description="Small ribosomal subunit protein bS21">
    <location>
        <begin position="1"/>
        <end position="96"/>
    </location>
</feature>
<feature type="region of interest" description="Disordered" evidence="2">
    <location>
        <begin position="52"/>
        <end position="96"/>
    </location>
</feature>
<feature type="compositionally biased region" description="Low complexity" evidence="2">
    <location>
        <begin position="69"/>
        <end position="96"/>
    </location>
</feature>
<comment type="similarity">
    <text evidence="1">Belongs to the bacterial ribosomal protein bS21 family.</text>
</comment>
<dbReference type="EMBL" id="CP001349">
    <property type="protein sequence ID" value="ACL56482.1"/>
    <property type="molecule type" value="Genomic_DNA"/>
</dbReference>
<dbReference type="RefSeq" id="WP_015928178.1">
    <property type="nucleotide sequence ID" value="NC_011894.1"/>
</dbReference>
<dbReference type="SMR" id="B8INF6"/>
<dbReference type="STRING" id="460265.Mnod_1490"/>
<dbReference type="KEGG" id="mno:Mnod_1490"/>
<dbReference type="eggNOG" id="COG0828">
    <property type="taxonomic scope" value="Bacteria"/>
</dbReference>
<dbReference type="HOGENOM" id="CLU_159258_0_1_5"/>
<dbReference type="OrthoDB" id="9811907at2"/>
<dbReference type="Proteomes" id="UP000008207">
    <property type="component" value="Chromosome"/>
</dbReference>
<dbReference type="GO" id="GO:1990904">
    <property type="term" value="C:ribonucleoprotein complex"/>
    <property type="evidence" value="ECO:0007669"/>
    <property type="project" value="UniProtKB-KW"/>
</dbReference>
<dbReference type="GO" id="GO:0005840">
    <property type="term" value="C:ribosome"/>
    <property type="evidence" value="ECO:0007669"/>
    <property type="project" value="UniProtKB-KW"/>
</dbReference>
<dbReference type="GO" id="GO:0003735">
    <property type="term" value="F:structural constituent of ribosome"/>
    <property type="evidence" value="ECO:0007669"/>
    <property type="project" value="InterPro"/>
</dbReference>
<dbReference type="GO" id="GO:0006412">
    <property type="term" value="P:translation"/>
    <property type="evidence" value="ECO:0007669"/>
    <property type="project" value="UniProtKB-UniRule"/>
</dbReference>
<dbReference type="Gene3D" id="1.20.5.1150">
    <property type="entry name" value="Ribosomal protein S8"/>
    <property type="match status" value="1"/>
</dbReference>
<dbReference type="HAMAP" id="MF_00358">
    <property type="entry name" value="Ribosomal_bS21"/>
    <property type="match status" value="1"/>
</dbReference>
<dbReference type="InterPro" id="IPR001911">
    <property type="entry name" value="Ribosomal_bS21"/>
</dbReference>
<dbReference type="InterPro" id="IPR038380">
    <property type="entry name" value="Ribosomal_bS21_sf"/>
</dbReference>
<dbReference type="NCBIfam" id="TIGR00030">
    <property type="entry name" value="S21p"/>
    <property type="match status" value="1"/>
</dbReference>
<dbReference type="PANTHER" id="PTHR21109">
    <property type="entry name" value="MITOCHONDRIAL 28S RIBOSOMAL PROTEIN S21"/>
    <property type="match status" value="1"/>
</dbReference>
<dbReference type="PANTHER" id="PTHR21109:SF0">
    <property type="entry name" value="SMALL RIBOSOMAL SUBUNIT PROTEIN BS21M"/>
    <property type="match status" value="1"/>
</dbReference>
<dbReference type="Pfam" id="PF01165">
    <property type="entry name" value="Ribosomal_S21"/>
    <property type="match status" value="1"/>
</dbReference>
<protein>
    <recommendedName>
        <fullName evidence="1">Small ribosomal subunit protein bS21</fullName>
    </recommendedName>
    <alternativeName>
        <fullName evidence="3">30S ribosomal protein S21</fullName>
    </alternativeName>
</protein>
<organism>
    <name type="scientific">Methylobacterium nodulans (strain LMG 21967 / CNCM I-2342 / ORS 2060)</name>
    <dbReference type="NCBI Taxonomy" id="460265"/>
    <lineage>
        <taxon>Bacteria</taxon>
        <taxon>Pseudomonadati</taxon>
        <taxon>Pseudomonadota</taxon>
        <taxon>Alphaproteobacteria</taxon>
        <taxon>Hyphomicrobiales</taxon>
        <taxon>Methylobacteriaceae</taxon>
        <taxon>Methylobacterium</taxon>
    </lineage>
</organism>
<sequence>MQVLVRDNNVDQALRVLKKKMQREGIFREMKQRKAYEKPSVRKAREKAEAVRRARKQARKTAIREGLIAAPKPKARPVSPRRPAAPAPASSPVGAA</sequence>
<name>RS21_METNO</name>
<accession>B8INF6</accession>
<gene>
    <name evidence="1" type="primary">rpsU</name>
    <name type="ordered locus">Mnod_1490</name>
</gene>
<proteinExistence type="inferred from homology"/>